<gene>
    <name type="primary">mus-53</name>
    <name type="synonym">lig4</name>
    <name type="ORF">NCU06264</name>
</gene>
<feature type="chain" id="PRO_0000278384" description="DNA ligase 4">
    <location>
        <begin position="1"/>
        <end position="1050"/>
    </location>
</feature>
<feature type="domain" description="BRCT 1" evidence="4">
    <location>
        <begin position="742"/>
        <end position="840"/>
    </location>
</feature>
<feature type="domain" description="BRCT 2" evidence="4">
    <location>
        <begin position="936"/>
        <end position="1049"/>
    </location>
</feature>
<feature type="region of interest" description="Disordered" evidence="6">
    <location>
        <begin position="1"/>
        <end position="22"/>
    </location>
</feature>
<feature type="region of interest" description="Disordered" evidence="6">
    <location>
        <begin position="691"/>
        <end position="711"/>
    </location>
</feature>
<feature type="compositionally biased region" description="Basic and acidic residues" evidence="6">
    <location>
        <begin position="691"/>
        <end position="702"/>
    </location>
</feature>
<feature type="active site" description="N6-AMP-lysine intermediate" evidence="5">
    <location>
        <position position="331"/>
    </location>
</feature>
<feature type="binding site" evidence="1">
    <location>
        <position position="329"/>
    </location>
    <ligand>
        <name>ATP</name>
        <dbReference type="ChEBI" id="CHEBI:30616"/>
    </ligand>
</feature>
<feature type="binding site" evidence="1">
    <location>
        <position position="331"/>
    </location>
    <ligand>
        <name>ATP</name>
        <dbReference type="ChEBI" id="CHEBI:30616"/>
    </ligand>
</feature>
<feature type="binding site" evidence="1">
    <location>
        <position position="332"/>
    </location>
    <ligand>
        <name>ATP</name>
        <dbReference type="ChEBI" id="CHEBI:30616"/>
    </ligand>
</feature>
<feature type="binding site" evidence="1">
    <location>
        <position position="336"/>
    </location>
    <ligand>
        <name>ATP</name>
        <dbReference type="ChEBI" id="CHEBI:30616"/>
    </ligand>
</feature>
<feature type="binding site" evidence="1">
    <location>
        <position position="398"/>
    </location>
    <ligand>
        <name>ATP</name>
        <dbReference type="ChEBI" id="CHEBI:30616"/>
    </ligand>
</feature>
<feature type="binding site" evidence="3">
    <location>
        <position position="398"/>
    </location>
    <ligand>
        <name>Mg(2+)</name>
        <dbReference type="ChEBI" id="CHEBI:18420"/>
        <label>1</label>
    </ligand>
</feature>
<feature type="binding site" evidence="1">
    <location>
        <position position="438"/>
    </location>
    <ligand>
        <name>ATP</name>
        <dbReference type="ChEBI" id="CHEBI:30616"/>
    </ligand>
</feature>
<feature type="binding site" evidence="1">
    <location>
        <position position="498"/>
    </location>
    <ligand>
        <name>ATP</name>
        <dbReference type="ChEBI" id="CHEBI:30616"/>
    </ligand>
</feature>
<feature type="binding site" evidence="3">
    <location>
        <position position="498"/>
    </location>
    <ligand>
        <name>Mg(2+)</name>
        <dbReference type="ChEBI" id="CHEBI:18420"/>
        <label>2</label>
    </ligand>
</feature>
<feature type="binding site" evidence="1">
    <location>
        <position position="503"/>
    </location>
    <ligand>
        <name>ATP</name>
        <dbReference type="ChEBI" id="CHEBI:30616"/>
    </ligand>
</feature>
<feature type="binding site" evidence="1">
    <location>
        <position position="520"/>
    </location>
    <ligand>
        <name>ATP</name>
        <dbReference type="ChEBI" id="CHEBI:30616"/>
    </ligand>
</feature>
<feature type="binding site" evidence="1">
    <location>
        <position position="522"/>
    </location>
    <ligand>
        <name>ATP</name>
        <dbReference type="ChEBI" id="CHEBI:30616"/>
    </ligand>
</feature>
<reference key="1">
    <citation type="journal article" date="2006" name="Proc. Natl. Acad. Sci. U.S.A.">
        <title>Nonhomologous chromosomal integration of foreign DNA is completely dependent on MUS-53 (human Lig4 homolog) in Neurospora.</title>
        <authorList>
            <person name="Ishibashi K."/>
            <person name="Suzuki K."/>
            <person name="Ando Y."/>
            <person name="Takakura C."/>
            <person name="Inoue H."/>
        </authorList>
    </citation>
    <scope>NUCLEOTIDE SEQUENCE [GENOMIC DNA]</scope>
    <scope>FUNCTION</scope>
</reference>
<reference key="2">
    <citation type="journal article" date="2003" name="Nature">
        <title>The genome sequence of the filamentous fungus Neurospora crassa.</title>
        <authorList>
            <person name="Galagan J.E."/>
            <person name="Calvo S.E."/>
            <person name="Borkovich K.A."/>
            <person name="Selker E.U."/>
            <person name="Read N.D."/>
            <person name="Jaffe D.B."/>
            <person name="FitzHugh W."/>
            <person name="Ma L.-J."/>
            <person name="Smirnov S."/>
            <person name="Purcell S."/>
            <person name="Rehman B."/>
            <person name="Elkins T."/>
            <person name="Engels R."/>
            <person name="Wang S."/>
            <person name="Nielsen C.B."/>
            <person name="Butler J."/>
            <person name="Endrizzi M."/>
            <person name="Qui D."/>
            <person name="Ianakiev P."/>
            <person name="Bell-Pedersen D."/>
            <person name="Nelson M.A."/>
            <person name="Werner-Washburne M."/>
            <person name="Selitrennikoff C.P."/>
            <person name="Kinsey J.A."/>
            <person name="Braun E.L."/>
            <person name="Zelter A."/>
            <person name="Schulte U."/>
            <person name="Kothe G.O."/>
            <person name="Jedd G."/>
            <person name="Mewes H.-W."/>
            <person name="Staben C."/>
            <person name="Marcotte E."/>
            <person name="Greenberg D."/>
            <person name="Roy A."/>
            <person name="Foley K."/>
            <person name="Naylor J."/>
            <person name="Stange-Thomann N."/>
            <person name="Barrett R."/>
            <person name="Gnerre S."/>
            <person name="Kamal M."/>
            <person name="Kamvysselis M."/>
            <person name="Mauceli E.W."/>
            <person name="Bielke C."/>
            <person name="Rudd S."/>
            <person name="Frishman D."/>
            <person name="Krystofova S."/>
            <person name="Rasmussen C."/>
            <person name="Metzenberg R.L."/>
            <person name="Perkins D.D."/>
            <person name="Kroken S."/>
            <person name="Cogoni C."/>
            <person name="Macino G."/>
            <person name="Catcheside D.E.A."/>
            <person name="Li W."/>
            <person name="Pratt R.J."/>
            <person name="Osmani S.A."/>
            <person name="DeSouza C.P.C."/>
            <person name="Glass N.L."/>
            <person name="Orbach M.J."/>
            <person name="Berglund J.A."/>
            <person name="Voelker R."/>
            <person name="Yarden O."/>
            <person name="Plamann M."/>
            <person name="Seiler S."/>
            <person name="Dunlap J.C."/>
            <person name="Radford A."/>
            <person name="Aramayo R."/>
            <person name="Natvig D.O."/>
            <person name="Alex L.A."/>
            <person name="Mannhaupt G."/>
            <person name="Ebbole D.J."/>
            <person name="Freitag M."/>
            <person name="Paulsen I."/>
            <person name="Sachs M.S."/>
            <person name="Lander E.S."/>
            <person name="Nusbaum C."/>
            <person name="Birren B.W."/>
        </authorList>
    </citation>
    <scope>NUCLEOTIDE SEQUENCE [LARGE SCALE GENOMIC DNA]</scope>
    <source>
        <strain>ATCC 24698 / 74-OR23-1A / CBS 708.71 / DSM 1257 / FGSC 987</strain>
    </source>
</reference>
<sequence length="1050" mass="119433">MNTNRRSRSPDEEALEEDQHQYGAGTLSLEELDEHFPNRPRNHSKTFPFSDLFRTLFNPLIDCKPSTSGGTVRGPKPGRGGHFSKVSYHEQRRHIIERFMSRWRSEVGNDFYPAMRLILPDKDRDRGVYGLKENTIGKLLVKVMKIDRNSEDGYNLMHWKLPGGQSGVSRSVGDFAGRCLEVVSKRAMRAQPGDLTIADVNVLLDRLAAASGEAEQLPIFEEFYRQMNAEEMMWLVRIILKDMRVGATERTFLNLWHPDAEALFSVSSSLRRVCWELFDPEFRLEQQETGIKLMQCFQPQLAQFQMTTTWEKLVKNLGVTEENPEFWIEEKLDGERMQMHMIEDDTVPGGFRFAFWSRKAKDYTYLYGESLGDEQSALTRHLHKAFDDGVRNLILDGEMITWDIDIDKMVPFGTLKTAALEQQKNPSKAGPRPLYRVFDILLLNDKPLTEYTLNDRRRALERAVVGVHRRLEILPFERATSPDAIEPLLRRVVAEASEGLVLKNPRSRYSLNSRNNDWIKVKPEYMSDFGESLDCVVVGGYFGSGRRGGTLSSFLCGVRVSQNFIKSGNASAEKCLSFVKVGGGFKAEDYAEIRHHTEGKWQDWDPSSPPTEYIELGGGEKLQYEKPDVWIRPSDSVVISVKAASITQSDQFAMGWTLRFPRFRKLRLDRAWDSALDMDEFEVLRSKIKDQEQERKKMEMENRKRKPATKRARKDLVIAGMSDPSSSSAATPVIAPKETREASKRLFEGLDFCVLSDSLKPNKMTKPALEKLIKDHGGRIHQQVMDHSGQGKIIIPIADKNVIKVASLRKANPEMDIIRPKWIFDCLVQPMPFTKQKENKKGYLLPFEPTHLFHSGSEETSEEAEQAVDKFGDSYAGDLADINELKAIMEGMESDDYVSDSDWDSDSGRGRGGGDGFDMNHFLDHLEEQGTSLDDLRSFMFRRCRVFFALPSAGNGDGAAESKALRLKNYIRFGNGKVVDELETATHVVVVTAPLGESSKKEEREIAAELRYKISLREMGSPMPRIVKGEWVEDSWKEGTVVDEEEYVAG</sequence>
<proteinExistence type="inferred from homology"/>
<accession>Q7SB49</accession>
<protein>
    <recommendedName>
        <fullName>DNA ligase 4</fullName>
        <ecNumber evidence="5">6.5.1.1</ecNumber>
    </recommendedName>
    <alternativeName>
        <fullName>DNA ligase IV</fullName>
    </alternativeName>
    <alternativeName>
        <fullName>Mutagen-sensitive protein 53</fullName>
    </alternativeName>
    <alternativeName>
        <fullName>Polydeoxyribonucleotide synthase [ATP] 4</fullName>
    </alternativeName>
</protein>
<name>DNLI4_NEUCR</name>
<evidence type="ECO:0000250" key="1">
    <source>
        <dbReference type="UniProtKB" id="P49917"/>
    </source>
</evidence>
<evidence type="ECO:0000250" key="2">
    <source>
        <dbReference type="UniProtKB" id="Q08387"/>
    </source>
</evidence>
<evidence type="ECO:0000255" key="3"/>
<evidence type="ECO:0000255" key="4">
    <source>
        <dbReference type="PROSITE-ProRule" id="PRU00033"/>
    </source>
</evidence>
<evidence type="ECO:0000255" key="5">
    <source>
        <dbReference type="PROSITE-ProRule" id="PRU10135"/>
    </source>
</evidence>
<evidence type="ECO:0000256" key="6">
    <source>
        <dbReference type="SAM" id="MobiDB-lite"/>
    </source>
</evidence>
<evidence type="ECO:0000269" key="7">
    <source>
    </source>
</evidence>
<evidence type="ECO:0000305" key="8"/>
<organism>
    <name type="scientific">Neurospora crassa (strain ATCC 24698 / 74-OR23-1A / CBS 708.71 / DSM 1257 / FGSC 987)</name>
    <dbReference type="NCBI Taxonomy" id="367110"/>
    <lineage>
        <taxon>Eukaryota</taxon>
        <taxon>Fungi</taxon>
        <taxon>Dikarya</taxon>
        <taxon>Ascomycota</taxon>
        <taxon>Pezizomycotina</taxon>
        <taxon>Sordariomycetes</taxon>
        <taxon>Sordariomycetidae</taxon>
        <taxon>Sordariales</taxon>
        <taxon>Sordariaceae</taxon>
        <taxon>Neurospora</taxon>
    </lineage>
</organism>
<keyword id="KW-0067">ATP-binding</keyword>
<keyword id="KW-0227">DNA damage</keyword>
<keyword id="KW-0233">DNA recombination</keyword>
<keyword id="KW-0234">DNA repair</keyword>
<keyword id="KW-0436">Ligase</keyword>
<keyword id="KW-0460">Magnesium</keyword>
<keyword id="KW-0479">Metal-binding</keyword>
<keyword id="KW-0547">Nucleotide-binding</keyword>
<keyword id="KW-0539">Nucleus</keyword>
<keyword id="KW-1185">Reference proteome</keyword>
<keyword id="KW-0677">Repeat</keyword>
<comment type="function">
    <text evidence="7">DNA ligase involved in DNA non-homologous end joining (NHEJ); required for double-strand break (DSB) repair.</text>
</comment>
<comment type="catalytic activity">
    <reaction evidence="5">
        <text>ATP + (deoxyribonucleotide)n-3'-hydroxyl + 5'-phospho-(deoxyribonucleotide)m = (deoxyribonucleotide)n+m + AMP + diphosphate.</text>
        <dbReference type="EC" id="6.5.1.1"/>
    </reaction>
</comment>
<comment type="cofactor">
    <cofactor evidence="1">
        <name>Mg(2+)</name>
        <dbReference type="ChEBI" id="CHEBI:18420"/>
    </cofactor>
</comment>
<comment type="subcellular location">
    <subcellularLocation>
        <location evidence="2">Nucleus</location>
    </subcellularLocation>
</comment>
<comment type="similarity">
    <text evidence="8">Belongs to the ATP-dependent DNA ligase family.</text>
</comment>
<comment type="sequence caution" evidence="8">
    <conflict type="erroneous gene model prediction">
        <sequence resource="EMBL-CDS" id="BAF34364"/>
    </conflict>
</comment>
<dbReference type="EC" id="6.5.1.1" evidence="5"/>
<dbReference type="EMBL" id="AB261106">
    <property type="protein sequence ID" value="BAF34364.1"/>
    <property type="status" value="ALT_SEQ"/>
    <property type="molecule type" value="Genomic_DNA"/>
</dbReference>
<dbReference type="EMBL" id="CM002238">
    <property type="protein sequence ID" value="EAA33632.2"/>
    <property type="molecule type" value="Genomic_DNA"/>
</dbReference>
<dbReference type="RefSeq" id="XP_962868.2">
    <property type="nucleotide sequence ID" value="XM_957775.2"/>
</dbReference>
<dbReference type="SMR" id="Q7SB49"/>
<dbReference type="FunCoup" id="Q7SB49">
    <property type="interactions" value="563"/>
</dbReference>
<dbReference type="STRING" id="367110.Q7SB49"/>
<dbReference type="PaxDb" id="5141-EFNCRP00000006048"/>
<dbReference type="EnsemblFungi" id="EAA33632">
    <property type="protein sequence ID" value="EAA33632"/>
    <property type="gene ID" value="NCU06264"/>
</dbReference>
<dbReference type="GeneID" id="3879007"/>
<dbReference type="KEGG" id="ncr:NCU06264"/>
<dbReference type="VEuPathDB" id="FungiDB:NCU06264"/>
<dbReference type="HOGENOM" id="CLU_004844_1_1_1"/>
<dbReference type="InParanoid" id="Q7SB49"/>
<dbReference type="OrthoDB" id="19394at2759"/>
<dbReference type="Proteomes" id="UP000001805">
    <property type="component" value="Chromosome 3, Linkage Group III"/>
</dbReference>
<dbReference type="GO" id="GO:0000785">
    <property type="term" value="C:chromatin"/>
    <property type="evidence" value="ECO:0007669"/>
    <property type="project" value="EnsemblFungi"/>
</dbReference>
<dbReference type="GO" id="GO:0032807">
    <property type="term" value="C:DNA ligase IV complex"/>
    <property type="evidence" value="ECO:0000318"/>
    <property type="project" value="GO_Central"/>
</dbReference>
<dbReference type="GO" id="GO:0005730">
    <property type="term" value="C:nucleolus"/>
    <property type="evidence" value="ECO:0007669"/>
    <property type="project" value="EnsemblFungi"/>
</dbReference>
<dbReference type="GO" id="GO:0005524">
    <property type="term" value="F:ATP binding"/>
    <property type="evidence" value="ECO:0000318"/>
    <property type="project" value="GO_Central"/>
</dbReference>
<dbReference type="GO" id="GO:0003677">
    <property type="term" value="F:DNA binding"/>
    <property type="evidence" value="ECO:0000318"/>
    <property type="project" value="GO_Central"/>
</dbReference>
<dbReference type="GO" id="GO:0003910">
    <property type="term" value="F:DNA ligase (ATP) activity"/>
    <property type="evidence" value="ECO:0000250"/>
    <property type="project" value="UniProtKB"/>
</dbReference>
<dbReference type="GO" id="GO:0046872">
    <property type="term" value="F:metal ion binding"/>
    <property type="evidence" value="ECO:0007669"/>
    <property type="project" value="UniProtKB-KW"/>
</dbReference>
<dbReference type="GO" id="GO:0071897">
    <property type="term" value="P:DNA biosynthetic process"/>
    <property type="evidence" value="ECO:0007669"/>
    <property type="project" value="InterPro"/>
</dbReference>
<dbReference type="GO" id="GO:0006310">
    <property type="term" value="P:DNA recombination"/>
    <property type="evidence" value="ECO:0007669"/>
    <property type="project" value="UniProtKB-KW"/>
</dbReference>
<dbReference type="GO" id="GO:0097680">
    <property type="term" value="P:double-strand break repair via classical nonhomologous end joining"/>
    <property type="evidence" value="ECO:0000250"/>
    <property type="project" value="UniProtKB"/>
</dbReference>
<dbReference type="GO" id="GO:0006303">
    <property type="term" value="P:double-strand break repair via nonhomologous end joining"/>
    <property type="evidence" value="ECO:0000318"/>
    <property type="project" value="GO_Central"/>
</dbReference>
<dbReference type="GO" id="GO:0006297">
    <property type="term" value="P:nucleotide-excision repair, DNA gap filling"/>
    <property type="evidence" value="ECO:0000318"/>
    <property type="project" value="GO_Central"/>
</dbReference>
<dbReference type="CDD" id="cd07903">
    <property type="entry name" value="Adenylation_DNA_ligase_IV"/>
    <property type="match status" value="1"/>
</dbReference>
<dbReference type="CDD" id="cd07968">
    <property type="entry name" value="OBF_DNA_ligase_IV"/>
    <property type="match status" value="1"/>
</dbReference>
<dbReference type="FunFam" id="2.40.50.140:FF:000234">
    <property type="entry name" value="DNA ligase"/>
    <property type="match status" value="1"/>
</dbReference>
<dbReference type="FunFam" id="3.30.470.30:FF:000013">
    <property type="entry name" value="DNA ligase"/>
    <property type="match status" value="1"/>
</dbReference>
<dbReference type="FunFam" id="1.10.3260.10:FF:000008">
    <property type="entry name" value="DNA ligase 4"/>
    <property type="match status" value="1"/>
</dbReference>
<dbReference type="Gene3D" id="3.40.50.10190">
    <property type="entry name" value="BRCT domain"/>
    <property type="match status" value="2"/>
</dbReference>
<dbReference type="Gene3D" id="1.10.3260.10">
    <property type="entry name" value="DNA ligase, ATP-dependent, N-terminal domain"/>
    <property type="match status" value="1"/>
</dbReference>
<dbReference type="Gene3D" id="3.30.470.30">
    <property type="entry name" value="DNA ligase/mRNA capping enzyme"/>
    <property type="match status" value="1"/>
</dbReference>
<dbReference type="Gene3D" id="2.40.50.140">
    <property type="entry name" value="Nucleic acid-binding proteins"/>
    <property type="match status" value="1"/>
</dbReference>
<dbReference type="InterPro" id="IPR044125">
    <property type="entry name" value="Adenylation_DNA_ligase_IV"/>
</dbReference>
<dbReference type="InterPro" id="IPR001357">
    <property type="entry name" value="BRCT_dom"/>
</dbReference>
<dbReference type="InterPro" id="IPR036420">
    <property type="entry name" value="BRCT_dom_sf"/>
</dbReference>
<dbReference type="InterPro" id="IPR000977">
    <property type="entry name" value="DNA_ligase_ATP-dep"/>
</dbReference>
<dbReference type="InterPro" id="IPR012309">
    <property type="entry name" value="DNA_ligase_ATP-dep_C"/>
</dbReference>
<dbReference type="InterPro" id="IPR012310">
    <property type="entry name" value="DNA_ligase_ATP-dep_cent"/>
</dbReference>
<dbReference type="InterPro" id="IPR016059">
    <property type="entry name" value="DNA_ligase_ATP-dep_CS"/>
</dbReference>
<dbReference type="InterPro" id="IPR012308">
    <property type="entry name" value="DNA_ligase_ATP-dep_N"/>
</dbReference>
<dbReference type="InterPro" id="IPR036599">
    <property type="entry name" value="DNA_ligase_N_sf"/>
</dbReference>
<dbReference type="InterPro" id="IPR029710">
    <property type="entry name" value="LIG4"/>
</dbReference>
<dbReference type="InterPro" id="IPR012340">
    <property type="entry name" value="NA-bd_OB-fold"/>
</dbReference>
<dbReference type="NCBIfam" id="TIGR00574">
    <property type="entry name" value="dnl1"/>
    <property type="match status" value="1"/>
</dbReference>
<dbReference type="PANTHER" id="PTHR45997">
    <property type="entry name" value="DNA LIGASE 4"/>
    <property type="match status" value="1"/>
</dbReference>
<dbReference type="PANTHER" id="PTHR45997:SF1">
    <property type="entry name" value="DNA LIGASE 4"/>
    <property type="match status" value="1"/>
</dbReference>
<dbReference type="Pfam" id="PF16589">
    <property type="entry name" value="BRCT_2"/>
    <property type="match status" value="1"/>
</dbReference>
<dbReference type="Pfam" id="PF04679">
    <property type="entry name" value="DNA_ligase_A_C"/>
    <property type="match status" value="1"/>
</dbReference>
<dbReference type="Pfam" id="PF01068">
    <property type="entry name" value="DNA_ligase_A_M"/>
    <property type="match status" value="1"/>
</dbReference>
<dbReference type="Pfam" id="PF04675">
    <property type="entry name" value="DNA_ligase_A_N"/>
    <property type="match status" value="1"/>
</dbReference>
<dbReference type="SUPFAM" id="SSF117018">
    <property type="entry name" value="ATP-dependent DNA ligase DNA-binding domain"/>
    <property type="match status" value="1"/>
</dbReference>
<dbReference type="SUPFAM" id="SSF52113">
    <property type="entry name" value="BRCT domain"/>
    <property type="match status" value="2"/>
</dbReference>
<dbReference type="SUPFAM" id="SSF56091">
    <property type="entry name" value="DNA ligase/mRNA capping enzyme, catalytic domain"/>
    <property type="match status" value="1"/>
</dbReference>
<dbReference type="SUPFAM" id="SSF50249">
    <property type="entry name" value="Nucleic acid-binding proteins"/>
    <property type="match status" value="1"/>
</dbReference>
<dbReference type="PROSITE" id="PS50172">
    <property type="entry name" value="BRCT"/>
    <property type="match status" value="2"/>
</dbReference>
<dbReference type="PROSITE" id="PS00697">
    <property type="entry name" value="DNA_LIGASE_A1"/>
    <property type="match status" value="1"/>
</dbReference>
<dbReference type="PROSITE" id="PS50160">
    <property type="entry name" value="DNA_LIGASE_A3"/>
    <property type="match status" value="1"/>
</dbReference>